<name>MED20_MACFA</name>
<sequence length="212" mass="23204">MGVTCVSQIPVAEGKSVQQTVELLTRKLEMLGAEKQGTFCVDCETYHTAASTLGSQGQTGKLMYVMHNSEYPLSCFALFENGPCLIADTNFDVLMVKLKGFFQSAKASKIETRGTRYQYCDFLVKVGTVTMGPSARGISVEVEYGPCVVASDCWSLLLEFLQSFLGSHTPGAPAVFGNRHDAVYGPADTMVQYMELFNKIRKQQQVPVAGIR</sequence>
<reference key="1">
    <citation type="submission" date="2005-06" db="EMBL/GenBank/DDBJ databases">
        <title>DNA sequences of macaque genes expressed in brain or testis and its evolutionary implications.</title>
        <authorList>
            <consortium name="International consortium for macaque cDNA sequencing and analysis"/>
        </authorList>
    </citation>
    <scope>NUCLEOTIDE SEQUENCE [LARGE SCALE MRNA]</scope>
    <source>
        <tissue>Frontal cortex</tissue>
    </source>
</reference>
<dbReference type="EMBL" id="AB169816">
    <property type="protein sequence ID" value="BAE01897.1"/>
    <property type="molecule type" value="mRNA"/>
</dbReference>
<dbReference type="RefSeq" id="NP_001270676.1">
    <property type="nucleotide sequence ID" value="NM_001283747.1"/>
</dbReference>
<dbReference type="SMR" id="Q4R4S8"/>
<dbReference type="STRING" id="9541.ENSMFAP00000007700"/>
<dbReference type="eggNOG" id="KOG4309">
    <property type="taxonomic scope" value="Eukaryota"/>
</dbReference>
<dbReference type="OrthoDB" id="1854899at2759"/>
<dbReference type="Proteomes" id="UP000233100">
    <property type="component" value="Unplaced"/>
</dbReference>
<dbReference type="GO" id="GO:0016592">
    <property type="term" value="C:mediator complex"/>
    <property type="evidence" value="ECO:0007669"/>
    <property type="project" value="InterPro"/>
</dbReference>
<dbReference type="GO" id="GO:0003713">
    <property type="term" value="F:transcription coactivator activity"/>
    <property type="evidence" value="ECO:0007669"/>
    <property type="project" value="TreeGrafter"/>
</dbReference>
<dbReference type="GO" id="GO:0006357">
    <property type="term" value="P:regulation of transcription by RNA polymerase II"/>
    <property type="evidence" value="ECO:0007669"/>
    <property type="project" value="InterPro"/>
</dbReference>
<dbReference type="InterPro" id="IPR013921">
    <property type="entry name" value="Mediator_Med20"/>
</dbReference>
<dbReference type="PANTHER" id="PTHR12465:SF0">
    <property type="entry name" value="MEDIATOR OF RNA POLYMERASE II TRANSCRIPTION SUBUNIT 20"/>
    <property type="match status" value="1"/>
</dbReference>
<dbReference type="PANTHER" id="PTHR12465">
    <property type="entry name" value="UBIQUITIN SPECIFIC PROTEASE HOMOLOG 49"/>
    <property type="match status" value="1"/>
</dbReference>
<dbReference type="Pfam" id="PF08612">
    <property type="entry name" value="Med20"/>
    <property type="match status" value="1"/>
</dbReference>
<feature type="chain" id="PRO_0000308554" description="Mediator of RNA polymerase II transcription subunit 20">
    <location>
        <begin position="1"/>
        <end position="212"/>
    </location>
</feature>
<evidence type="ECO:0000250" key="1"/>
<evidence type="ECO:0000305" key="2"/>
<gene>
    <name type="primary">MED20</name>
    <name type="synonym">TRFP</name>
    <name type="ORF">QflA-10052</name>
</gene>
<comment type="function">
    <text evidence="1">Component of the Mediator complex, a coactivator involved in the regulated transcription of nearly all RNA polymerase II-dependent genes. Mediator functions as a bridge to convey information from gene-specific regulatory proteins to the basal RNA polymerase II transcription machinery. Mediator is recruited to promoters by direct interactions with regulatory proteins and serves as a scaffold for the assembly of a functional preinitiation complex with RNA polymerase II and the general transcription factors (By similarity).</text>
</comment>
<comment type="subunit">
    <text evidence="1">Component of the Mediator complex, which is composed of MED1, MED4, MED6, MED7, MED8, MED9, MED10, MED11, MED12, MED13, MED13L, MED14, MED15, MED16, MED17, MED18, MED19, MED20, MED21, MED22, MED23, MED24, MED25, MED26, MED27, MED29, MED30, MED31, CCNC, CDK8 and CDC2L6/CDK11. The MED12, MED13, CCNC and CDK8 subunits form a distinct module termed the CDK8 module. Mediator containing the CDK8 module is less active than Mediator lacking this module in supporting transcriptional activation. Individual preparations of the Mediator complex lacking one or more distinct subunits have been variously termed ARC, CRSP, DRIP, PC2, SMCC and TRAP. Interacts with PPARG (By similarity).</text>
</comment>
<comment type="subcellular location">
    <subcellularLocation>
        <location evidence="2">Nucleus</location>
    </subcellularLocation>
</comment>
<comment type="similarity">
    <text evidence="2">Belongs to the Mediator complex subunit 20 family.</text>
</comment>
<protein>
    <recommendedName>
        <fullName>Mediator of RNA polymerase II transcription subunit 20</fullName>
    </recommendedName>
    <alternativeName>
        <fullName>Mediator complex subunit 20</fullName>
    </alternativeName>
    <alternativeName>
        <fullName>TRF-proximal protein homolog</fullName>
    </alternativeName>
</protein>
<keyword id="KW-0010">Activator</keyword>
<keyword id="KW-0539">Nucleus</keyword>
<keyword id="KW-1185">Reference proteome</keyword>
<keyword id="KW-0804">Transcription</keyword>
<keyword id="KW-0805">Transcription regulation</keyword>
<organism>
    <name type="scientific">Macaca fascicularis</name>
    <name type="common">Crab-eating macaque</name>
    <name type="synonym">Cynomolgus monkey</name>
    <dbReference type="NCBI Taxonomy" id="9541"/>
    <lineage>
        <taxon>Eukaryota</taxon>
        <taxon>Metazoa</taxon>
        <taxon>Chordata</taxon>
        <taxon>Craniata</taxon>
        <taxon>Vertebrata</taxon>
        <taxon>Euteleostomi</taxon>
        <taxon>Mammalia</taxon>
        <taxon>Eutheria</taxon>
        <taxon>Euarchontoglires</taxon>
        <taxon>Primates</taxon>
        <taxon>Haplorrhini</taxon>
        <taxon>Catarrhini</taxon>
        <taxon>Cercopithecidae</taxon>
        <taxon>Cercopithecinae</taxon>
        <taxon>Macaca</taxon>
    </lineage>
</organism>
<proteinExistence type="evidence at transcript level"/>
<accession>Q4R4S8</accession>